<organism>
    <name type="scientific">Buchnera aphidicola subsp. Schizaphis graminum (strain Sg)</name>
    <dbReference type="NCBI Taxonomy" id="198804"/>
    <lineage>
        <taxon>Bacteria</taxon>
        <taxon>Pseudomonadati</taxon>
        <taxon>Pseudomonadota</taxon>
        <taxon>Gammaproteobacteria</taxon>
        <taxon>Enterobacterales</taxon>
        <taxon>Erwiniaceae</taxon>
        <taxon>Buchnera</taxon>
    </lineage>
</organism>
<evidence type="ECO:0000250" key="1"/>
<evidence type="ECO:0000255" key="2">
    <source>
        <dbReference type="PROSITE-ProRule" id="PRU00681"/>
    </source>
</evidence>
<evidence type="ECO:0000305" key="3"/>
<keyword id="KW-0963">Cytoplasm</keyword>
<keyword id="KW-0598">Phosphotransferase system</keyword>
<keyword id="KW-0762">Sugar transport</keyword>
<keyword id="KW-0813">Transport</keyword>
<reference key="1">
    <citation type="journal article" date="2002" name="Science">
        <title>50 million years of genomic stasis in endosymbiotic bacteria.</title>
        <authorList>
            <person name="Tamas I."/>
            <person name="Klasson L."/>
            <person name="Canbaeck B."/>
            <person name="Naeslund A.K."/>
            <person name="Eriksson A.-S."/>
            <person name="Wernegreen J.J."/>
            <person name="Sandstroem J.P."/>
            <person name="Moran N.A."/>
            <person name="Andersson S.G.E."/>
        </authorList>
    </citation>
    <scope>NUCLEOTIDE SEQUENCE [LARGE SCALE GENOMIC DNA]</scope>
    <source>
        <strain>Sg</strain>
    </source>
</reference>
<accession>Q8KA49</accession>
<protein>
    <recommendedName>
        <fullName>Phosphocarrier protein HPr</fullName>
    </recommendedName>
    <alternativeName>
        <fullName>Histidine-containing protein</fullName>
    </alternativeName>
</protein>
<dbReference type="EMBL" id="AE013218">
    <property type="protein sequence ID" value="AAM67633.1"/>
    <property type="molecule type" value="Genomic_DNA"/>
</dbReference>
<dbReference type="RefSeq" id="WP_011053599.1">
    <property type="nucleotide sequence ID" value="NC_004061.1"/>
</dbReference>
<dbReference type="SMR" id="Q8KA49"/>
<dbReference type="STRING" id="198804.BUsg_062"/>
<dbReference type="GeneID" id="93003529"/>
<dbReference type="KEGG" id="bas:BUsg_062"/>
<dbReference type="eggNOG" id="COG1925">
    <property type="taxonomic scope" value="Bacteria"/>
</dbReference>
<dbReference type="HOGENOM" id="CLU_136230_2_3_6"/>
<dbReference type="Proteomes" id="UP000000416">
    <property type="component" value="Chromosome"/>
</dbReference>
<dbReference type="GO" id="GO:0005737">
    <property type="term" value="C:cytoplasm"/>
    <property type="evidence" value="ECO:0007669"/>
    <property type="project" value="UniProtKB-SubCell"/>
</dbReference>
<dbReference type="GO" id="GO:0009401">
    <property type="term" value="P:phosphoenolpyruvate-dependent sugar phosphotransferase system"/>
    <property type="evidence" value="ECO:0007669"/>
    <property type="project" value="UniProtKB-KW"/>
</dbReference>
<dbReference type="CDD" id="cd00367">
    <property type="entry name" value="PTS-HPr_like"/>
    <property type="match status" value="1"/>
</dbReference>
<dbReference type="Gene3D" id="3.30.1340.10">
    <property type="entry name" value="HPr-like"/>
    <property type="match status" value="1"/>
</dbReference>
<dbReference type="InterPro" id="IPR050399">
    <property type="entry name" value="HPr"/>
</dbReference>
<dbReference type="InterPro" id="IPR000032">
    <property type="entry name" value="HPr-like"/>
</dbReference>
<dbReference type="InterPro" id="IPR035895">
    <property type="entry name" value="HPr-like_sf"/>
</dbReference>
<dbReference type="InterPro" id="IPR001020">
    <property type="entry name" value="PTS_HPr_His_P_site"/>
</dbReference>
<dbReference type="InterPro" id="IPR002114">
    <property type="entry name" value="PTS_HPr_Ser_P_site"/>
</dbReference>
<dbReference type="NCBIfam" id="TIGR01003">
    <property type="entry name" value="PTS_HPr_family"/>
    <property type="match status" value="1"/>
</dbReference>
<dbReference type="PANTHER" id="PTHR33705">
    <property type="entry name" value="PHOSPHOCARRIER PROTEIN HPR"/>
    <property type="match status" value="1"/>
</dbReference>
<dbReference type="PANTHER" id="PTHR33705:SF1">
    <property type="entry name" value="PHOSPHOCARRIER PROTEIN HPR"/>
    <property type="match status" value="1"/>
</dbReference>
<dbReference type="Pfam" id="PF00381">
    <property type="entry name" value="PTS-HPr"/>
    <property type="match status" value="1"/>
</dbReference>
<dbReference type="PRINTS" id="PR00107">
    <property type="entry name" value="PHOSPHOCPHPR"/>
</dbReference>
<dbReference type="SUPFAM" id="SSF55594">
    <property type="entry name" value="HPr-like"/>
    <property type="match status" value="1"/>
</dbReference>
<dbReference type="PROSITE" id="PS51350">
    <property type="entry name" value="PTS_HPR_DOM"/>
    <property type="match status" value="1"/>
</dbReference>
<dbReference type="PROSITE" id="PS00369">
    <property type="entry name" value="PTS_HPR_HIS"/>
    <property type="match status" value="1"/>
</dbReference>
<dbReference type="PROSITE" id="PS00589">
    <property type="entry name" value="PTS_HPR_SER"/>
    <property type="match status" value="1"/>
</dbReference>
<feature type="chain" id="PRO_0000107845" description="Phosphocarrier protein HPr">
    <location>
        <begin position="1"/>
        <end position="85"/>
    </location>
</feature>
<feature type="domain" description="HPr" evidence="2">
    <location>
        <begin position="1"/>
        <end position="85"/>
    </location>
</feature>
<feature type="active site" description="Pros-phosphohistidine intermediate" evidence="2">
    <location>
        <position position="15"/>
    </location>
</feature>
<proteinExistence type="inferred from homology"/>
<sequence length="85" mass="9571">MFQKEIKINALHGLHTRPAAEFVKEAKNFISDIHIIYHGKSVNAKSLFKIQTLGLVKDSVIILSAEGEDEKKAVEHLSKIMTELE</sequence>
<name>PTHP_BUCAP</name>
<comment type="function">
    <text evidence="1">General (non sugar-specific) component of the phosphoenolpyruvate-dependent sugar phosphotransferase system (sugar PTS). This major carbohydrate active-transport system catalyzes the phosphorylation of incoming sugar substrates concomitantly with their translocation across the cell membrane. The phosphoryl group from phosphoenolpyruvate (PEP) is transferred to the phosphoryl carrier protein HPr by enzyme I. Phospho-HPr then transfers it to the PTS EIIA domain.</text>
</comment>
<comment type="subcellular location">
    <subcellularLocation>
        <location evidence="1">Cytoplasm</location>
    </subcellularLocation>
</comment>
<comment type="similarity">
    <text evidence="3">Belongs to the HPr family.</text>
</comment>
<gene>
    <name type="primary">ptsH</name>
    <name type="ordered locus">BUsg_062</name>
</gene>